<reference key="1">
    <citation type="submission" date="2000-09" db="EMBL/GenBank/DDBJ databases">
        <title>RACE cloning and expression of canine cathepsin L.</title>
        <authorList>
            <person name="Eto Y."/>
            <person name="Hirata M."/>
            <person name="Takeuchi A."/>
            <person name="Yamamoto Y."/>
            <person name="Taga A."/>
            <person name="Taura Y."/>
            <person name="Takahashi S.Y."/>
        </authorList>
    </citation>
    <scope>NUCLEOTIDE SEQUENCE [MRNA]</scope>
    <source>
        <tissue>Liver</tissue>
    </source>
</reference>
<accession>Q9GL24</accession>
<comment type="function">
    <text evidence="2 3 4 5">Thiol protease important for the overall degradation of proteins in lysosomes (By similarity). Plays a critical for normal cellular functions such as general protein turnover, antigen processing and bone remodeling. Involved in the solubilization of cross-linked TG/thyroglobulin and in the subsequent release of thyroid hormone thyroxine (T4) by limited proteolysis of TG/thyroglobulin in the thyroid follicle lumen (By similarity). In neuroendocrine chromaffin cells secretory vesicles, catalyzes the prohormone proenkephalin processing to the active enkephalin peptide neurotransmitter (By similarity). In thymus, regulates CD4(+) T cell positive selection by generating the major histocompatibility complex class II (MHCII) bound peptide ligands presented by cortical thymic epithelial cells. Also mediates invariant chain processing in cortical thymic epithelial cells. Major elastin-degrading enzyme at neutral pH. Accumulates as a mature and active enzyme in the extracellular space of antigen presenting cells (APCs) to regulate degradation of the extracellular matrix in the course of inflammation (By similarity). Secreted form generates endostatin from COL18A1 (By similarity). Critical for cardiac morphology and function. Plays an important role in hair follicle morphogenesis and cycling, as well as epidermal differentiation (By similarity). Required for maximal stimulation of steroidogenesis by TIMP1 (By similarity).</text>
</comment>
<comment type="catalytic activity">
    <reaction evidence="4">
        <text>Specificity close to that of papain. As compared to cathepsin B, cathepsin L exhibits higher activity toward protein substrates, but has little activity on Z-Arg-Arg-NHMec, and no peptidyl-dipeptidase activity.</text>
        <dbReference type="EC" id="3.4.22.15"/>
    </reaction>
</comment>
<comment type="activity regulation">
    <text evidence="2 4">Inhibited by the propeptide produced by autocleavage (By similarity). Long isoform of CD74/Ii chain stabilizes the conformation of mature CTSL by binding to its active site and serving as a chaperone to help maintain a pool of mature enzyme in endocytic compartments and extracellular space of APCs. IFNG enhances the conversion into the CTSL mature and active form (By similarity). Inhibited by CST6. Inhibited by the glycopeptide antibiotic teicoplanin. Inhibited by amantadine (By similarity).</text>
</comment>
<comment type="subunit">
    <text evidence="2">Dimer of a heavy and a light chain linked by disulfide bonds. Interacts with Long isoform of CD74/Ii chain; the interaction stabilizes the conformation of mature CTSL.</text>
</comment>
<comment type="subcellular location">
    <subcellularLocation>
        <location evidence="2">Lysosome</location>
    </subcellularLocation>
    <subcellularLocation>
        <location evidence="2">Apical cell membrane</location>
        <topology evidence="2">Peripheral membrane protein</topology>
        <orientation evidence="2">Extracellular side</orientation>
    </subcellularLocation>
    <subcellularLocation>
        <location evidence="5">Cytoplasmic vesicle</location>
        <location evidence="5">Secretory vesicle</location>
        <location evidence="5">Chromaffin granule</location>
    </subcellularLocation>
    <subcellularLocation>
        <location evidence="2">Secreted</location>
        <location evidence="2">Extracellular space</location>
    </subcellularLocation>
    <subcellularLocation>
        <location evidence="2">Secreted</location>
    </subcellularLocation>
    <text evidence="2">Localizes to the apical membrane of thyroid epithelial cells. Released at extracellular space by activated dendritic cells and macrophages.</text>
</comment>
<comment type="PTM">
    <text evidence="2 4">During export along the endocytic pathway, pro-CTSL undergoes several proteolytic cleavages to generate the CTSL single-chain and two-chain mature forms, composed of a heavy chain linked to a light chain by disulfide bonds (By similarity). Autocleavage; produces the single-chain CTSL after cleavage of the propeptide. The cleavage can be intermolecular (By similarity).</text>
</comment>
<comment type="similarity">
    <text evidence="7 8 9">Belongs to the peptidase C1 family.</text>
</comment>
<gene>
    <name type="primary">CTSL</name>
    <name type="synonym">CTSL1</name>
</gene>
<organism>
    <name type="scientific">Canis lupus familiaris</name>
    <name type="common">Dog</name>
    <name type="synonym">Canis familiaris</name>
    <dbReference type="NCBI Taxonomy" id="9615"/>
    <lineage>
        <taxon>Eukaryota</taxon>
        <taxon>Metazoa</taxon>
        <taxon>Chordata</taxon>
        <taxon>Craniata</taxon>
        <taxon>Vertebrata</taxon>
        <taxon>Euteleostomi</taxon>
        <taxon>Mammalia</taxon>
        <taxon>Eutheria</taxon>
        <taxon>Laurasiatheria</taxon>
        <taxon>Carnivora</taxon>
        <taxon>Caniformia</taxon>
        <taxon>Canidae</taxon>
        <taxon>Canis</taxon>
    </lineage>
</organism>
<dbReference type="EC" id="3.4.22.15"/>
<dbReference type="EMBL" id="AJ279008">
    <property type="protein sequence ID" value="CAC08809.1"/>
    <property type="molecule type" value="mRNA"/>
</dbReference>
<dbReference type="SMR" id="Q9GL24"/>
<dbReference type="FunCoup" id="Q9GL24">
    <property type="interactions" value="794"/>
</dbReference>
<dbReference type="STRING" id="9615.ENSCAFP00000001630"/>
<dbReference type="MEROPS" id="C01.032"/>
<dbReference type="GlyCosmos" id="Q9GL24">
    <property type="glycosylation" value="1 site, No reported glycans"/>
</dbReference>
<dbReference type="PaxDb" id="9612-ENSCAFP00000001630"/>
<dbReference type="Ensembl" id="ENSCAFT00000001770.5">
    <property type="protein sequence ID" value="ENSCAFP00000001630.3"/>
    <property type="gene ID" value="ENSCAFG00000001149.5"/>
</dbReference>
<dbReference type="Ensembl" id="ENSCAFT00000023837.4">
    <property type="protein sequence ID" value="ENSCAFP00000040898.1"/>
    <property type="gene ID" value="ENSCAFG00000015024.4"/>
</dbReference>
<dbReference type="Ensembl" id="ENSCAFT00030008770.1">
    <property type="protein sequence ID" value="ENSCAFP00030007712.1"/>
    <property type="gene ID" value="ENSCAFG00030004769.1"/>
</dbReference>
<dbReference type="Ensembl" id="ENSCAFT00030025598.1">
    <property type="protein sequence ID" value="ENSCAFP00030022351.1"/>
    <property type="gene ID" value="ENSCAFG00030013828.1"/>
</dbReference>
<dbReference type="Ensembl" id="ENSCAFT00040006653.1">
    <property type="protein sequence ID" value="ENSCAFP00040005759.1"/>
    <property type="gene ID" value="ENSCAFG00040003499.1"/>
</dbReference>
<dbReference type="Ensembl" id="ENSCAFT00040033001.1">
    <property type="protein sequence ID" value="ENSCAFP00040028714.1"/>
    <property type="gene ID" value="ENSCAFG00040017888.1"/>
</dbReference>
<dbReference type="Ensembl" id="ENSCAFT00845005177.1">
    <property type="protein sequence ID" value="ENSCAFP00845004111.1"/>
    <property type="gene ID" value="ENSCAFG00845002925.1"/>
</dbReference>
<dbReference type="Ensembl" id="ENSCAFT00845053897.1">
    <property type="protein sequence ID" value="ENSCAFP00845042356.1"/>
    <property type="gene ID" value="ENSCAFG00845030379.1"/>
</dbReference>
<dbReference type="GeneID" id="102156614"/>
<dbReference type="KEGG" id="cfa:102156614"/>
<dbReference type="CTD" id="1515"/>
<dbReference type="VEuPathDB" id="HostDB:ENSCAFG00845002925"/>
<dbReference type="VEuPathDB" id="HostDB:ENSCAFG00845030379"/>
<dbReference type="eggNOG" id="KOG1543">
    <property type="taxonomic scope" value="Eukaryota"/>
</dbReference>
<dbReference type="GeneTree" id="ENSGT00940000154367"/>
<dbReference type="HOGENOM" id="CLU_012184_1_2_1"/>
<dbReference type="InParanoid" id="Q9GL24"/>
<dbReference type="OMA" id="HNGEYSE"/>
<dbReference type="OrthoDB" id="10253408at2759"/>
<dbReference type="TreeFam" id="TF313739"/>
<dbReference type="Reactome" id="R-CFA-1474228">
    <property type="pathway name" value="Degradation of the extracellular matrix"/>
</dbReference>
<dbReference type="Reactome" id="R-CFA-1592389">
    <property type="pathway name" value="Activation of Matrix Metalloproteinases"/>
</dbReference>
<dbReference type="Reactome" id="R-CFA-1679131">
    <property type="pathway name" value="Trafficking and processing of endosomal TLR"/>
</dbReference>
<dbReference type="Reactome" id="R-CFA-2132295">
    <property type="pathway name" value="MHC class II antigen presentation"/>
</dbReference>
<dbReference type="Reactome" id="R-CFA-8939242">
    <property type="pathway name" value="RUNX1 regulates transcription of genes involved in differentiation of keratinocytes"/>
</dbReference>
<dbReference type="Proteomes" id="UP000002254">
    <property type="component" value="Chromosome 1"/>
</dbReference>
<dbReference type="Proteomes" id="UP000002254">
    <property type="component" value="Chromosome X"/>
</dbReference>
<dbReference type="Proteomes" id="UP000694429">
    <property type="component" value="Chromosome 1"/>
</dbReference>
<dbReference type="Proteomes" id="UP000694429">
    <property type="component" value="Unassembled WGS sequence"/>
</dbReference>
<dbReference type="Proteomes" id="UP000694542">
    <property type="component" value="Chromosome 1"/>
</dbReference>
<dbReference type="Proteomes" id="UP000694542">
    <property type="component" value="Chromosome X"/>
</dbReference>
<dbReference type="Proteomes" id="UP000805418">
    <property type="component" value="Chromosome 1"/>
</dbReference>
<dbReference type="Proteomes" id="UP000805418">
    <property type="component" value="Chromosome X"/>
</dbReference>
<dbReference type="Bgee" id="ENSCAFG00000001149">
    <property type="expression patterns" value="Expressed in thymus and 47 other cell types or tissues"/>
</dbReference>
<dbReference type="GO" id="GO:0016324">
    <property type="term" value="C:apical plasma membrane"/>
    <property type="evidence" value="ECO:0007669"/>
    <property type="project" value="UniProtKB-SubCell"/>
</dbReference>
<dbReference type="GO" id="GO:0042583">
    <property type="term" value="C:chromaffin granule"/>
    <property type="evidence" value="ECO:0000250"/>
    <property type="project" value="UniProtKB"/>
</dbReference>
<dbReference type="GO" id="GO:0005615">
    <property type="term" value="C:extracellular space"/>
    <property type="evidence" value="ECO:0000250"/>
    <property type="project" value="UniProtKB"/>
</dbReference>
<dbReference type="GO" id="GO:0005764">
    <property type="term" value="C:lysosome"/>
    <property type="evidence" value="ECO:0000250"/>
    <property type="project" value="UniProtKB"/>
</dbReference>
<dbReference type="GO" id="GO:0004197">
    <property type="term" value="F:cysteine-type endopeptidase activity"/>
    <property type="evidence" value="ECO:0000250"/>
    <property type="project" value="UniProtKB"/>
</dbReference>
<dbReference type="GO" id="GO:0004175">
    <property type="term" value="F:endopeptidase activity"/>
    <property type="evidence" value="ECO:0000250"/>
    <property type="project" value="UniProtKB"/>
</dbReference>
<dbReference type="GO" id="GO:0046872">
    <property type="term" value="F:metal ion binding"/>
    <property type="evidence" value="ECO:0007669"/>
    <property type="project" value="UniProtKB-KW"/>
</dbReference>
<dbReference type="GO" id="GO:0048002">
    <property type="term" value="P:antigen processing and presentation of peptide antigen"/>
    <property type="evidence" value="ECO:0000250"/>
    <property type="project" value="UniProtKB"/>
</dbReference>
<dbReference type="GO" id="GO:0043373">
    <property type="term" value="P:CD4-positive, alpha-beta T cell lineage commitment"/>
    <property type="evidence" value="ECO:0000250"/>
    <property type="project" value="UniProtKB"/>
</dbReference>
<dbReference type="GO" id="GO:0030574">
    <property type="term" value="P:collagen catabolic process"/>
    <property type="evidence" value="ECO:0000250"/>
    <property type="project" value="UniProtKB"/>
</dbReference>
<dbReference type="GO" id="GO:0060309">
    <property type="term" value="P:elastin catabolic process"/>
    <property type="evidence" value="ECO:0000250"/>
    <property type="project" value="UniProtKB"/>
</dbReference>
<dbReference type="GO" id="GO:0034230">
    <property type="term" value="P:enkephalin processing"/>
    <property type="evidence" value="ECO:0000250"/>
    <property type="project" value="UniProtKB"/>
</dbReference>
<dbReference type="GO" id="GO:0016540">
    <property type="term" value="P:protein autoprocessing"/>
    <property type="evidence" value="ECO:0000250"/>
    <property type="project" value="UniProtKB"/>
</dbReference>
<dbReference type="GO" id="GO:0051603">
    <property type="term" value="P:proteolysis involved in protein catabolic process"/>
    <property type="evidence" value="ECO:0000318"/>
    <property type="project" value="GO_Central"/>
</dbReference>
<dbReference type="GO" id="GO:0031638">
    <property type="term" value="P:zymogen activation"/>
    <property type="evidence" value="ECO:0000250"/>
    <property type="project" value="UniProtKB"/>
</dbReference>
<dbReference type="CDD" id="cd02248">
    <property type="entry name" value="Peptidase_C1A"/>
    <property type="match status" value="1"/>
</dbReference>
<dbReference type="FunFam" id="3.90.70.10:FF:000332">
    <property type="entry name" value="Cathepsin L1"/>
    <property type="match status" value="1"/>
</dbReference>
<dbReference type="Gene3D" id="3.90.70.10">
    <property type="entry name" value="Cysteine proteinases"/>
    <property type="match status" value="1"/>
</dbReference>
<dbReference type="InterPro" id="IPR038765">
    <property type="entry name" value="Papain-like_cys_pep_sf"/>
</dbReference>
<dbReference type="InterPro" id="IPR025661">
    <property type="entry name" value="Pept_asp_AS"/>
</dbReference>
<dbReference type="InterPro" id="IPR000169">
    <property type="entry name" value="Pept_cys_AS"/>
</dbReference>
<dbReference type="InterPro" id="IPR025660">
    <property type="entry name" value="Pept_his_AS"/>
</dbReference>
<dbReference type="InterPro" id="IPR013128">
    <property type="entry name" value="Peptidase_C1A"/>
</dbReference>
<dbReference type="InterPro" id="IPR000668">
    <property type="entry name" value="Peptidase_C1A_C"/>
</dbReference>
<dbReference type="InterPro" id="IPR039417">
    <property type="entry name" value="Peptidase_C1A_papain-like"/>
</dbReference>
<dbReference type="InterPro" id="IPR013201">
    <property type="entry name" value="Prot_inhib_I29"/>
</dbReference>
<dbReference type="PANTHER" id="PTHR12411">
    <property type="entry name" value="CYSTEINE PROTEASE FAMILY C1-RELATED"/>
    <property type="match status" value="1"/>
</dbReference>
<dbReference type="Pfam" id="PF08246">
    <property type="entry name" value="Inhibitor_I29"/>
    <property type="match status" value="1"/>
</dbReference>
<dbReference type="Pfam" id="PF00112">
    <property type="entry name" value="Peptidase_C1"/>
    <property type="match status" value="1"/>
</dbReference>
<dbReference type="PRINTS" id="PR00705">
    <property type="entry name" value="PAPAIN"/>
</dbReference>
<dbReference type="SMART" id="SM00848">
    <property type="entry name" value="Inhibitor_I29"/>
    <property type="match status" value="1"/>
</dbReference>
<dbReference type="SMART" id="SM00645">
    <property type="entry name" value="Pept_C1"/>
    <property type="match status" value="1"/>
</dbReference>
<dbReference type="SUPFAM" id="SSF54001">
    <property type="entry name" value="Cysteine proteinases"/>
    <property type="match status" value="1"/>
</dbReference>
<dbReference type="PROSITE" id="PS00640">
    <property type="entry name" value="THIOL_PROTEASE_ASN"/>
    <property type="match status" value="1"/>
</dbReference>
<dbReference type="PROSITE" id="PS00139">
    <property type="entry name" value="THIOL_PROTEASE_CYS"/>
    <property type="match status" value="1"/>
</dbReference>
<dbReference type="PROSITE" id="PS00639">
    <property type="entry name" value="THIOL_PROTEASE_HIS"/>
    <property type="match status" value="1"/>
</dbReference>
<protein>
    <recommendedName>
        <fullName>Procathepsin L</fullName>
        <ecNumber>3.4.22.15</ecNumber>
    </recommendedName>
    <alternativeName>
        <fullName>Cathepsin L1</fullName>
    </alternativeName>
    <component>
        <recommendedName>
            <fullName>Cathepsin L</fullName>
        </recommendedName>
    </component>
    <component>
        <recommendedName>
            <fullName>Cathepsin L heavy chain</fullName>
        </recommendedName>
    </component>
    <component>
        <recommendedName>
            <fullName>Cathepsin L light chain</fullName>
        </recommendedName>
    </component>
</protein>
<evidence type="ECO:0000250" key="1"/>
<evidence type="ECO:0000250" key="2">
    <source>
        <dbReference type="UniProtKB" id="P06797"/>
    </source>
</evidence>
<evidence type="ECO:0000250" key="3">
    <source>
        <dbReference type="UniProtKB" id="P07154"/>
    </source>
</evidence>
<evidence type="ECO:0000250" key="4">
    <source>
        <dbReference type="UniProtKB" id="P07711"/>
    </source>
</evidence>
<evidence type="ECO:0000250" key="5">
    <source>
        <dbReference type="UniProtKB" id="P25975"/>
    </source>
</evidence>
<evidence type="ECO:0000255" key="6"/>
<evidence type="ECO:0000255" key="7">
    <source>
        <dbReference type="PROSITE-ProRule" id="PRU10088"/>
    </source>
</evidence>
<evidence type="ECO:0000255" key="8">
    <source>
        <dbReference type="PROSITE-ProRule" id="PRU10089"/>
    </source>
</evidence>
<evidence type="ECO:0000255" key="9">
    <source>
        <dbReference type="PROSITE-ProRule" id="PRU10090"/>
    </source>
</evidence>
<proteinExistence type="evidence at transcript level"/>
<keyword id="KW-1003">Cell membrane</keyword>
<keyword id="KW-0968">Cytoplasmic vesicle</keyword>
<keyword id="KW-1015">Disulfide bond</keyword>
<keyword id="KW-0325">Glycoprotein</keyword>
<keyword id="KW-0378">Hydrolase</keyword>
<keyword id="KW-0458">Lysosome</keyword>
<keyword id="KW-0472">Membrane</keyword>
<keyword id="KW-0479">Metal-binding</keyword>
<keyword id="KW-0645">Protease</keyword>
<keyword id="KW-1185">Reference proteome</keyword>
<keyword id="KW-0964">Secreted</keyword>
<keyword id="KW-0732">Signal</keyword>
<keyword id="KW-0788">Thiol protease</keyword>
<keyword id="KW-0862">Zinc</keyword>
<keyword id="KW-0865">Zymogen</keyword>
<sequence>MNPSLFLTALCLGIASAAPKFDQSLNAQWYQWKATHRRLYGMNEEGWRRAVWEKNMKMIELHNREYSQGKHGFTMAMNAFGDMTNEEFRQVMNGFQNQKHKKGKMFQEPLFAEIPKSVDWREKGYVTPVKNQGQCGSCWAFSATGALEGQMFRKTGKLVSLSEQNLVDCSRAQGNEGCNGGLMDNAFRYVKDNGGLDSEESYPYLGRDTETCNYKPECSAANDTGFVDLPQREKALMKAVATLGPISVAIDAGHQSFQFYKSGIYFDPDCSSKDLDHGVLVVGYGFEGTDSNNKFWIVKNSWGPEWGWNGYVKMAKDQNNHCGIATAASYPTV</sequence>
<name>CATL1_CANLF</name>
<feature type="signal peptide" evidence="3">
    <location>
        <begin position="1"/>
        <end position="17"/>
    </location>
</feature>
<feature type="propeptide" id="PRO_0000026240" description="Activation peptide" evidence="1">
    <location>
        <begin position="18"/>
        <end position="117"/>
    </location>
</feature>
<feature type="chain" id="PRO_0000450785" description="Cathepsin L" evidence="4">
    <location>
        <begin position="118"/>
        <end position="333"/>
    </location>
</feature>
<feature type="chain" id="PRO_0000026241" description="Cathepsin L heavy chain">
    <location>
        <begin position="118"/>
        <end position="289"/>
    </location>
</feature>
<feature type="propeptide" id="PRO_0000026242" evidence="1">
    <location>
        <begin position="290"/>
        <end position="291"/>
    </location>
</feature>
<feature type="chain" id="PRO_0000026243" description="Cathepsin L light chain">
    <location>
        <begin position="292"/>
        <end position="333"/>
    </location>
</feature>
<feature type="active site" evidence="4">
    <location>
        <position position="138"/>
    </location>
</feature>
<feature type="active site" evidence="4">
    <location>
        <position position="277"/>
    </location>
</feature>
<feature type="active site" evidence="4">
    <location>
        <position position="300"/>
    </location>
</feature>
<feature type="binding site" evidence="4">
    <location>
        <position position="122"/>
    </location>
    <ligand>
        <name>Zn(2+)</name>
        <dbReference type="ChEBI" id="CHEBI:29105"/>
        <label>1</label>
    </ligand>
</feature>
<feature type="binding site" evidence="4">
    <location>
        <position position="163"/>
    </location>
    <ligand>
        <name>Zn(2+)</name>
        <dbReference type="ChEBI" id="CHEBI:29105"/>
        <label>2</label>
    </ligand>
</feature>
<feature type="binding site" evidence="4">
    <location>
        <position position="184"/>
    </location>
    <ligand>
        <name>Zn(2+)</name>
        <dbReference type="ChEBI" id="CHEBI:29105"/>
        <label>3</label>
    </ligand>
</feature>
<feature type="binding site" evidence="4">
    <location>
        <position position="199"/>
    </location>
    <ligand>
        <name>Zn(2+)</name>
        <dbReference type="ChEBI" id="CHEBI:29105"/>
        <label>2</label>
    </ligand>
</feature>
<feature type="binding site" evidence="4">
    <location>
        <position position="210"/>
    </location>
    <ligand>
        <name>Zn(2+)</name>
        <dbReference type="ChEBI" id="CHEBI:29105"/>
        <label>4</label>
    </ligand>
</feature>
<feature type="binding site" evidence="4">
    <location>
        <position position="228"/>
    </location>
    <ligand>
        <name>Zn(2+)</name>
        <dbReference type="ChEBI" id="CHEBI:29105"/>
        <label>3</label>
    </ligand>
</feature>
<feature type="binding site" evidence="4">
    <location>
        <position position="251"/>
    </location>
    <ligand>
        <name>Zn(2+)</name>
        <dbReference type="ChEBI" id="CHEBI:29105"/>
        <label>5</label>
    </ligand>
</feature>
<feature type="binding site" evidence="4">
    <location>
        <position position="254"/>
    </location>
    <ligand>
        <name>Zn(2+)</name>
        <dbReference type="ChEBI" id="CHEBI:29105"/>
        <label>5</label>
    </ligand>
</feature>
<feature type="binding site" evidence="4">
    <location>
        <position position="274"/>
    </location>
    <ligand>
        <name>Zn(2+)</name>
        <dbReference type="ChEBI" id="CHEBI:29105"/>
        <label>6</label>
    </ligand>
</feature>
<feature type="binding site" evidence="4">
    <location>
        <position position="276"/>
    </location>
    <ligand>
        <name>Zn(2+)</name>
        <dbReference type="ChEBI" id="CHEBI:29105"/>
        <label>7</label>
    </ligand>
</feature>
<feature type="site" description="Cleavage; by autolysis" evidence="4">
    <location>
        <begin position="106"/>
        <end position="107"/>
    </location>
</feature>
<feature type="site" description="Cleavage; by autolysis" evidence="4">
    <location>
        <begin position="107"/>
        <end position="108"/>
    </location>
</feature>
<feature type="site" description="Cleavage; by autolysis" evidence="4">
    <location>
        <begin position="112"/>
        <end position="113"/>
    </location>
</feature>
<feature type="site" description="Cleavage; by autolysis" evidence="4">
    <location>
        <begin position="113"/>
        <end position="114"/>
    </location>
</feature>
<feature type="glycosylation site" description="N-linked (GlcNAc...) asparagine" evidence="6">
    <location>
        <position position="222"/>
    </location>
</feature>
<feature type="disulfide bond" evidence="4">
    <location>
        <begin position="135"/>
        <end position="178"/>
    </location>
</feature>
<feature type="disulfide bond" evidence="4">
    <location>
        <begin position="169"/>
        <end position="212"/>
    </location>
</feature>
<feature type="disulfide bond" description="Interchain (between heavy and light chains)" evidence="4">
    <location>
        <begin position="270"/>
        <end position="322"/>
    </location>
</feature>